<gene>
    <name evidence="1" type="primary">carS</name>
    <name type="ordered locus">UNCMA_22430</name>
    <name type="ORF">RCIX520</name>
</gene>
<name>CDPAS_METAR</name>
<evidence type="ECO:0000255" key="1">
    <source>
        <dbReference type="HAMAP-Rule" id="MF_01117"/>
    </source>
</evidence>
<accession>Q0W6Q1</accession>
<reference key="1">
    <citation type="journal article" date="2006" name="Science">
        <title>Genome of rice cluster I archaea -- the key methane producers in the rice rhizosphere.</title>
        <authorList>
            <person name="Erkel C."/>
            <person name="Kube M."/>
            <person name="Reinhardt R."/>
            <person name="Liesack W."/>
        </authorList>
    </citation>
    <scope>NUCLEOTIDE SEQUENCE [LARGE SCALE GENOMIC DNA]</scope>
    <source>
        <strain>DSM 22066 / NBRC 105507 / MRE50</strain>
    </source>
</reference>
<keyword id="KW-1003">Cell membrane</keyword>
<keyword id="KW-0444">Lipid biosynthesis</keyword>
<keyword id="KW-0443">Lipid metabolism</keyword>
<keyword id="KW-0460">Magnesium</keyword>
<keyword id="KW-0472">Membrane</keyword>
<keyword id="KW-0594">Phospholipid biosynthesis</keyword>
<keyword id="KW-1208">Phospholipid metabolism</keyword>
<keyword id="KW-1185">Reference proteome</keyword>
<keyword id="KW-0808">Transferase</keyword>
<keyword id="KW-0812">Transmembrane</keyword>
<keyword id="KW-1133">Transmembrane helix</keyword>
<feature type="chain" id="PRO_0000298290" description="CDP-archaeol synthase">
    <location>
        <begin position="1"/>
        <end position="174"/>
    </location>
</feature>
<feature type="transmembrane region" description="Helical" evidence="1">
    <location>
        <begin position="51"/>
        <end position="71"/>
    </location>
</feature>
<feature type="transmembrane region" description="Helical" evidence="1">
    <location>
        <begin position="74"/>
        <end position="94"/>
    </location>
</feature>
<feature type="transmembrane region" description="Helical" evidence="1">
    <location>
        <begin position="112"/>
        <end position="132"/>
    </location>
</feature>
<feature type="transmembrane region" description="Helical" evidence="1">
    <location>
        <begin position="136"/>
        <end position="156"/>
    </location>
</feature>
<proteinExistence type="inferred from homology"/>
<comment type="function">
    <text evidence="1">Catalyzes the formation of CDP-2,3-bis-(O-geranylgeranyl)-sn-glycerol (CDP-archaeol) from 2,3-bis-(O-geranylgeranyl)-sn-glycerol 1-phosphate (DGGGP) and CTP. This reaction is the third ether-bond-formation step in the biosynthesis of archaeal membrane lipids.</text>
</comment>
<comment type="catalytic activity">
    <reaction evidence="1">
        <text>2,3-bis-O-(geranylgeranyl)-sn-glycerol 1-phosphate + CTP + H(+) = CDP-2,3-bis-O-(geranylgeranyl)-sn-glycerol + diphosphate</text>
        <dbReference type="Rhea" id="RHEA:25690"/>
        <dbReference type="ChEBI" id="CHEBI:15378"/>
        <dbReference type="ChEBI" id="CHEBI:33019"/>
        <dbReference type="ChEBI" id="CHEBI:37563"/>
        <dbReference type="ChEBI" id="CHEBI:58837"/>
        <dbReference type="ChEBI" id="CHEBI:58838"/>
        <dbReference type="EC" id="2.7.7.67"/>
    </reaction>
</comment>
<comment type="cofactor">
    <cofactor evidence="1">
        <name>Mg(2+)</name>
        <dbReference type="ChEBI" id="CHEBI:18420"/>
    </cofactor>
</comment>
<comment type="pathway">
    <text evidence="1">Membrane lipid metabolism; glycerophospholipid metabolism.</text>
</comment>
<comment type="subcellular location">
    <subcellularLocation>
        <location evidence="1">Cell membrane</location>
        <topology evidence="1">Multi-pass membrane protein</topology>
    </subcellularLocation>
</comment>
<comment type="similarity">
    <text evidence="1">Belongs to the CDP-archaeol synthase family.</text>
</comment>
<dbReference type="EC" id="2.7.7.67" evidence="1"/>
<dbReference type="EMBL" id="AM114193">
    <property type="protein sequence ID" value="CAJ35942.1"/>
    <property type="molecule type" value="Genomic_DNA"/>
</dbReference>
<dbReference type="SMR" id="Q0W6Q1"/>
<dbReference type="STRING" id="351160.RCIX520"/>
<dbReference type="KEGG" id="rci:RCIX520"/>
<dbReference type="eggNOG" id="arCOG04106">
    <property type="taxonomic scope" value="Archaea"/>
</dbReference>
<dbReference type="UniPathway" id="UPA00940"/>
<dbReference type="Proteomes" id="UP000000663">
    <property type="component" value="Chromosome"/>
</dbReference>
<dbReference type="GO" id="GO:0005886">
    <property type="term" value="C:plasma membrane"/>
    <property type="evidence" value="ECO:0007669"/>
    <property type="project" value="UniProtKB-SubCell"/>
</dbReference>
<dbReference type="GO" id="GO:0043338">
    <property type="term" value="F:CDP-2,3-bis-(O-geranylgeranyl)-sn-glycerol synthase activity"/>
    <property type="evidence" value="ECO:0007669"/>
    <property type="project" value="UniProtKB-EC"/>
</dbReference>
<dbReference type="GO" id="GO:0046474">
    <property type="term" value="P:glycerophospholipid biosynthetic process"/>
    <property type="evidence" value="ECO:0007669"/>
    <property type="project" value="UniProtKB-UniRule"/>
</dbReference>
<dbReference type="HAMAP" id="MF_01117">
    <property type="entry name" value="CDP_archaeol_synth"/>
    <property type="match status" value="1"/>
</dbReference>
<dbReference type="InterPro" id="IPR032690">
    <property type="entry name" value="CarS"/>
</dbReference>
<dbReference type="InterPro" id="IPR002726">
    <property type="entry name" value="CarS_archaea"/>
</dbReference>
<dbReference type="NCBIfam" id="NF003114">
    <property type="entry name" value="PRK04032.1"/>
    <property type="match status" value="1"/>
</dbReference>
<dbReference type="PANTHER" id="PTHR39650">
    <property type="entry name" value="CDP-ARCHAEOL SYNTHASE"/>
    <property type="match status" value="1"/>
</dbReference>
<dbReference type="PANTHER" id="PTHR39650:SF1">
    <property type="entry name" value="CDP-ARCHAEOL SYNTHASE"/>
    <property type="match status" value="1"/>
</dbReference>
<dbReference type="Pfam" id="PF01864">
    <property type="entry name" value="CarS-like"/>
    <property type="match status" value="1"/>
</dbReference>
<sequence>MIPAGLANPFAALFGGGTPIDFGKNFKDNRRILGDGKTYRGLIFGSLCGTLIGLLQILLAPHIAPYLAGFIDPSLLVGYSYIALITMPFGALLGDIVKSFFKRRLGFERGAMLPIADQLDFVAGAWVLTFLLDPEWLLANFTIWVAIAVILIIPVFHVAFNIAGYKLGKKDVPW</sequence>
<protein>
    <recommendedName>
        <fullName evidence="1">CDP-archaeol synthase</fullName>
        <ecNumber evidence="1">2.7.7.67</ecNumber>
    </recommendedName>
    <alternativeName>
        <fullName evidence="1">CDP-2,3-bis-(O-geranylgeranyl)-sn-glycerol synthase</fullName>
    </alternativeName>
</protein>
<organism>
    <name type="scientific">Methanocella arvoryzae (strain DSM 22066 / NBRC 105507 / MRE50)</name>
    <dbReference type="NCBI Taxonomy" id="351160"/>
    <lineage>
        <taxon>Archaea</taxon>
        <taxon>Methanobacteriati</taxon>
        <taxon>Methanobacteriota</taxon>
        <taxon>Stenosarchaea group</taxon>
        <taxon>Methanomicrobia</taxon>
        <taxon>Methanocellales</taxon>
        <taxon>Methanocellaceae</taxon>
        <taxon>Methanocella</taxon>
    </lineage>
</organism>